<feature type="chain" id="PRO_0000219236" description="Tetraspanin-2">
    <location>
        <begin position="1"/>
        <end position="221"/>
    </location>
</feature>
<feature type="topological domain" description="Cytoplasmic" evidence="2">
    <location>
        <begin position="1"/>
        <end position="13"/>
    </location>
</feature>
<feature type="transmembrane region" description="Helical" evidence="2">
    <location>
        <begin position="14"/>
        <end position="34"/>
    </location>
</feature>
<feature type="topological domain" description="Extracellular" evidence="2">
    <location>
        <begin position="35"/>
        <end position="54"/>
    </location>
</feature>
<feature type="transmembrane region" description="Helical" evidence="2">
    <location>
        <begin position="55"/>
        <end position="75"/>
    </location>
</feature>
<feature type="topological domain" description="Cytoplasmic" evidence="2">
    <location>
        <begin position="76"/>
        <end position="90"/>
    </location>
</feature>
<feature type="transmembrane region" description="Helical" evidence="2">
    <location>
        <begin position="91"/>
        <end position="111"/>
    </location>
</feature>
<feature type="topological domain" description="Extracellular" evidence="2">
    <location>
        <begin position="112"/>
        <end position="188"/>
    </location>
</feature>
<feature type="transmembrane region" description="Helical" evidence="2">
    <location>
        <begin position="189"/>
        <end position="209"/>
    </location>
</feature>
<feature type="topological domain" description="Cytoplasmic" evidence="2">
    <location>
        <begin position="210"/>
        <end position="221"/>
    </location>
</feature>
<feature type="glycosylation site" description="N-linked (GlcNAc...) asparagine" evidence="2">
    <location>
        <position position="139"/>
    </location>
</feature>
<feature type="splice variant" id="VSP_047734" description="In isoform 2." evidence="3">
    <location>
        <begin position="173"/>
        <end position="200"/>
    </location>
</feature>
<feature type="sequence variant" id="VAR_052328" description="In dbSNP:rs9659602.">
    <original>R</original>
    <variation>L</variation>
    <location>
        <position position="118"/>
    </location>
</feature>
<feature type="sequence conflict" description="In Ref. 1; AAC69715." evidence="4" ref="1">
    <original>AMR</original>
    <variation>PCW</variation>
    <location>
        <begin position="80"/>
        <end position="82"/>
    </location>
</feature>
<feature type="sequence conflict" description="In Ref. 1; AAC69715." evidence="4" ref="1">
    <original>HST</original>
    <variation>PLQH</variation>
    <location>
        <begin position="146"/>
        <end position="148"/>
    </location>
</feature>
<feature type="sequence conflict" description="In Ref. 1; AAC69715." evidence="4" ref="1">
    <original>G</original>
    <variation>R</variation>
    <location>
        <position position="170"/>
    </location>
</feature>
<keyword id="KW-0025">Alternative splicing</keyword>
<keyword id="KW-0325">Glycoprotein</keyword>
<keyword id="KW-0472">Membrane</keyword>
<keyword id="KW-1267">Proteomics identification</keyword>
<keyword id="KW-1185">Reference proteome</keyword>
<keyword id="KW-0812">Transmembrane</keyword>
<keyword id="KW-1133">Transmembrane helix</keyword>
<comment type="function">
    <text evidence="1">May play a role in signalling in oligodendrocytes in the early stages of their terminal differentiation into myelin-forming glia and may also function in stabilizing the mature sheath.</text>
</comment>
<comment type="interaction">
    <interactant intactId="EBI-3914288">
        <id>O60636</id>
    </interactant>
    <interactant intactId="EBI-348517">
        <id>O95870</id>
        <label>ABHD16A</label>
    </interactant>
    <organismsDiffer>false</organismsDiffer>
    <experiments>3</experiments>
</comment>
<comment type="interaction">
    <interactant intactId="EBI-3914288">
        <id>O60636</id>
    </interactant>
    <interactant intactId="EBI-11954292">
        <id>Q86V38</id>
        <label>ATN1</label>
    </interactant>
    <organismsDiffer>false</organismsDiffer>
    <experiments>3</experiments>
</comment>
<comment type="interaction">
    <interactant intactId="EBI-3914288">
        <id>O60636</id>
    </interactant>
    <interactant intactId="EBI-12894731">
        <id>Q9UN42</id>
        <label>ATP1B4</label>
    </interactant>
    <organismsDiffer>false</organismsDiffer>
    <experiments>3</experiments>
</comment>
<comment type="interaction">
    <interactant intactId="EBI-3914288">
        <id>O60636</id>
    </interactant>
    <interactant intactId="EBI-11532900">
        <id>J3KQ12</id>
        <label>BSCL2</label>
    </interactant>
    <organismsDiffer>false</organismsDiffer>
    <experiments>3</experiments>
</comment>
<comment type="interaction">
    <interactant intactId="EBI-3914288">
        <id>O60636</id>
    </interactant>
    <interactant intactId="EBI-7797864">
        <id>P11912</id>
        <label>CD79A</label>
    </interactant>
    <organismsDiffer>false</organismsDiffer>
    <experiments>3</experiments>
</comment>
<comment type="interaction">
    <interactant intactId="EBI-3914288">
        <id>O60636</id>
    </interactant>
    <interactant intactId="EBI-18400628">
        <id>O00501</id>
        <label>CLDN5</label>
    </interactant>
    <organismsDiffer>false</organismsDiffer>
    <experiments>3</experiments>
</comment>
<comment type="interaction">
    <interactant intactId="EBI-3914288">
        <id>O60636</id>
    </interactant>
    <interactant intactId="EBI-17710733">
        <id>Q86T13</id>
        <label>CLEC14A</label>
    </interactant>
    <organismsDiffer>false</organismsDiffer>
    <experiments>3</experiments>
</comment>
<comment type="interaction">
    <interactant intactId="EBI-3914288">
        <id>O60636</id>
    </interactant>
    <interactant intactId="EBI-6942903">
        <id>Q96BA8</id>
        <label>CREB3L1</label>
    </interactant>
    <organismsDiffer>false</organismsDiffer>
    <experiments>3</experiments>
</comment>
<comment type="interaction">
    <interactant intactId="EBI-3914288">
        <id>O60636</id>
    </interactant>
    <interactant intactId="EBI-6875961">
        <id>P02489</id>
        <label>CRYAA</label>
    </interactant>
    <organismsDiffer>false</organismsDiffer>
    <experiments>3</experiments>
</comment>
<comment type="interaction">
    <interactant intactId="EBI-3914288">
        <id>O60636</id>
    </interactant>
    <interactant intactId="EBI-12135455">
        <id>Q96PD2-2</id>
        <label>DCBLD2</label>
    </interactant>
    <organismsDiffer>false</organismsDiffer>
    <experiments>3</experiments>
</comment>
<comment type="interaction">
    <interactant intactId="EBI-3914288">
        <id>O60636</id>
    </interactant>
    <interactant intactId="EBI-2565863">
        <id>P00488</id>
        <label>F13A1</label>
    </interactant>
    <organismsDiffer>false</organismsDiffer>
    <experiments>3</experiments>
</comment>
<comment type="interaction">
    <interactant intactId="EBI-3914288">
        <id>O60636</id>
    </interactant>
    <interactant intactId="EBI-18304435">
        <id>Q5JX71</id>
        <label>FAM209A</label>
    </interactant>
    <organismsDiffer>false</organismsDiffer>
    <experiments>3</experiments>
</comment>
<comment type="interaction">
    <interactant intactId="EBI-3914288">
        <id>O60636</id>
    </interactant>
    <interactant intactId="EBI-348399">
        <id>P22607</id>
        <label>FGFR3</label>
    </interactant>
    <organismsDiffer>false</organismsDiffer>
    <experiments>3</experiments>
</comment>
<comment type="interaction">
    <interactant intactId="EBI-3914288">
        <id>O60636</id>
    </interactant>
    <interactant intactId="EBI-10226858">
        <id>Q0VDC6</id>
        <label>FKBP1A</label>
    </interactant>
    <organismsDiffer>false</organismsDiffer>
    <experiments>3</experiments>
</comment>
<comment type="interaction">
    <interactant intactId="EBI-3914288">
        <id>O60636</id>
    </interactant>
    <interactant intactId="EBI-3918971">
        <id>Q9Y680</id>
        <label>FKBP7</label>
    </interactant>
    <organismsDiffer>false</organismsDiffer>
    <experiments>3</experiments>
</comment>
<comment type="interaction">
    <interactant intactId="EBI-3914288">
        <id>O60636</id>
    </interactant>
    <interactant intactId="EBI-401755">
        <id>P62993</id>
        <label>GRB2</label>
    </interactant>
    <organismsDiffer>false</organismsDiffer>
    <experiments>6</experiments>
</comment>
<comment type="interaction">
    <interactant intactId="EBI-3914288">
        <id>O60636</id>
    </interactant>
    <interactant intactId="EBI-351506">
        <id>P06396</id>
        <label>GSN</label>
    </interactant>
    <organismsDiffer>false</organismsDiffer>
    <experiments>3</experiments>
</comment>
<comment type="interaction">
    <interactant intactId="EBI-3914288">
        <id>O60636</id>
    </interactant>
    <interactant intactId="EBI-356991">
        <id>P54652</id>
        <label>HSPA2</label>
    </interactant>
    <organismsDiffer>false</organismsDiffer>
    <experiments>3</experiments>
</comment>
<comment type="interaction">
    <interactant intactId="EBI-3914288">
        <id>O60636</id>
    </interactant>
    <interactant intactId="EBI-3905457">
        <id>P38484</id>
        <label>IFNGR2</label>
    </interactant>
    <organismsDiffer>false</organismsDiffer>
    <experiments>3</experiments>
</comment>
<comment type="interaction">
    <interactant intactId="EBI-3914288">
        <id>O60636</id>
    </interactant>
    <interactant intactId="EBI-18157502">
        <id>O43731-2</id>
        <label>KDELR3</label>
    </interactant>
    <organismsDiffer>false</organismsDiffer>
    <experiments>3</experiments>
</comment>
<comment type="interaction">
    <interactant intactId="EBI-3914288">
        <id>O60636</id>
    </interactant>
    <interactant intactId="EBI-948266">
        <id>O14901</id>
        <label>KLF11</label>
    </interactant>
    <organismsDiffer>false</organismsDiffer>
    <experiments>3</experiments>
</comment>
<comment type="interaction">
    <interactant intactId="EBI-3914288">
        <id>O60636</id>
    </interactant>
    <interactant intactId="EBI-2432309">
        <id>Q92876</id>
        <label>KLK6</label>
    </interactant>
    <organismsDiffer>false</organismsDiffer>
    <experiments>3</experiments>
</comment>
<comment type="interaction">
    <interactant intactId="EBI-3914288">
        <id>O60636</id>
    </interactant>
    <interactant intactId="EBI-750776">
        <id>O95214</id>
        <label>LEPROTL1</label>
    </interactant>
    <organismsDiffer>false</organismsDiffer>
    <experiments>3</experiments>
</comment>
<comment type="interaction">
    <interactant intactId="EBI-3914288">
        <id>O60636</id>
    </interactant>
    <interactant intactId="EBI-11956541">
        <id>Q9GZY8-5</id>
        <label>MFF</label>
    </interactant>
    <organismsDiffer>false</organismsDiffer>
    <experiments>3</experiments>
</comment>
<comment type="interaction">
    <interactant intactId="EBI-3914288">
        <id>O60636</id>
    </interactant>
    <interactant intactId="EBI-724754">
        <id>O14880</id>
        <label>MGST3</label>
    </interactant>
    <organismsDiffer>false</organismsDiffer>
    <experiments>3</experiments>
</comment>
<comment type="interaction">
    <interactant intactId="EBI-3914288">
        <id>O60636</id>
    </interactant>
    <interactant intactId="EBI-2811583">
        <id>Q9BVL2</id>
        <label>NUP58</label>
    </interactant>
    <organismsDiffer>false</organismsDiffer>
    <experiments>3</experiments>
</comment>
<comment type="interaction">
    <interactant intactId="EBI-3914288">
        <id>O60636</id>
    </interactant>
    <interactant intactId="EBI-1050125">
        <id>O15173</id>
        <label>PGRMC2</label>
    </interactant>
    <organismsDiffer>false</organismsDiffer>
    <experiments>3</experiments>
</comment>
<comment type="interaction">
    <interactant intactId="EBI-3914288">
        <id>O60636</id>
    </interactant>
    <interactant intactId="EBI-79893">
        <id>Q92569</id>
        <label>PIK3R3</label>
    </interactant>
    <organismsDiffer>false</organismsDiffer>
    <experiments>3</experiments>
</comment>
<comment type="interaction">
    <interactant intactId="EBI-3914288">
        <id>O60636</id>
    </interactant>
    <interactant intactId="EBI-7545592">
        <id>Q9H6H4</id>
        <label>REEP4</label>
    </interactant>
    <organismsDiffer>false</organismsDiffer>
    <experiments>3</experiments>
</comment>
<comment type="interaction">
    <interactant intactId="EBI-3914288">
        <id>O60636</id>
    </interactant>
    <interactant intactId="EBI-2466594">
        <id>Q6ZMZ0</id>
        <label>RNF19B</label>
    </interactant>
    <organismsDiffer>false</organismsDiffer>
    <experiments>3</experiments>
</comment>
<comment type="interaction">
    <interactant intactId="EBI-3914288">
        <id>O60636</id>
    </interactant>
    <interactant intactId="EBI-17247926">
        <id>Q9NY72</id>
        <label>SCN3B</label>
    </interactant>
    <organismsDiffer>false</organismsDiffer>
    <experiments>3</experiments>
</comment>
<comment type="interaction">
    <interactant intactId="EBI-3914288">
        <id>O60636</id>
    </interactant>
    <interactant intactId="EBI-18159983">
        <id>Q3KNW5</id>
        <label>SLC10A6</label>
    </interactant>
    <organismsDiffer>false</organismsDiffer>
    <experiments>3</experiments>
</comment>
<comment type="interaction">
    <interactant intactId="EBI-3914288">
        <id>O60636</id>
    </interactant>
    <interactant intactId="EBI-10262251">
        <id>Q8IWU4</id>
        <label>SLC30A8</label>
    </interactant>
    <organismsDiffer>false</organismsDiffer>
    <experiments>3</experiments>
</comment>
<comment type="interaction">
    <interactant intactId="EBI-3914288">
        <id>O60636</id>
    </interactant>
    <interactant intactId="EBI-17295964">
        <id>Q9NQQ7-3</id>
        <label>SLC35C2</label>
    </interactant>
    <organismsDiffer>false</organismsDiffer>
    <experiments>3</experiments>
</comment>
<comment type="interaction">
    <interactant intactId="EBI-3914288">
        <id>O60636</id>
    </interactant>
    <interactant intactId="EBI-19763514">
        <id>Q8N3G9</id>
        <label>TMEM130</label>
    </interactant>
    <organismsDiffer>false</organismsDiffer>
    <experiments>3</experiments>
</comment>
<comment type="interaction">
    <interactant intactId="EBI-3914288">
        <id>O60636</id>
    </interactant>
    <interactant intactId="EBI-8638294">
        <id>Q9NUH8</id>
        <label>TMEM14B</label>
    </interactant>
    <organismsDiffer>false</organismsDiffer>
    <experiments>3</experiments>
</comment>
<comment type="interaction">
    <interactant intactId="EBI-3914288">
        <id>O60636</id>
    </interactant>
    <interactant intactId="EBI-6447886">
        <id>Q9Y320</id>
        <label>TMX2</label>
    </interactant>
    <organismsDiffer>false</organismsDiffer>
    <experiments>3</experiments>
</comment>
<comment type="interaction">
    <interactant intactId="EBI-3914288">
        <id>O60636</id>
    </interactant>
    <interactant intactId="EBI-17678331">
        <id>Q12999</id>
        <label>TSPAN31</label>
    </interactant>
    <organismsDiffer>false</organismsDiffer>
    <experiments>3</experiments>
</comment>
<comment type="interaction">
    <interactant intactId="EBI-3914288">
        <id>O60636</id>
    </interactant>
    <interactant intactId="EBI-741480">
        <id>Q9UMX0</id>
        <label>UBQLN1</label>
    </interactant>
    <organismsDiffer>false</organismsDiffer>
    <experiments>3</experiments>
</comment>
<comment type="interaction">
    <interactant intactId="EBI-3914288">
        <id>O60636</id>
    </interactant>
    <interactant intactId="EBI-744988">
        <id>Q9H7M9</id>
        <label>VSIR</label>
    </interactant>
    <organismsDiffer>false</organismsDiffer>
    <experiments>3</experiments>
</comment>
<comment type="interaction">
    <interactant intactId="EBI-3914288">
        <id>O60636</id>
    </interactant>
    <interactant intactId="EBI-3892947">
        <id>Q5T4F4</id>
        <label>ZFYVE27</label>
    </interactant>
    <organismsDiffer>false</organismsDiffer>
    <experiments>3</experiments>
</comment>
<comment type="subcellular location">
    <subcellularLocation>
        <location evidence="4">Membrane</location>
        <topology evidence="4">Multi-pass membrane protein</topology>
    </subcellularLocation>
</comment>
<comment type="alternative products">
    <event type="alternative splicing"/>
    <isoform>
        <id>O60636-1</id>
        <name>1</name>
        <sequence type="displayed"/>
    </isoform>
    <isoform>
        <id>O60636-2</id>
        <name>2</name>
        <sequence type="described" ref="VSP_047734"/>
    </isoform>
</comment>
<comment type="similarity">
    <text evidence="4">Belongs to the tetraspanin (TM4SF) family.</text>
</comment>
<sequence length="221" mass="24148">MGRFRGGLRCIKYLLLGFNLLFWLAGSAVIAFGLWFRFGGAIKELSSEDKSPEYFYVGLYVLVGAGALMMAVGFFGCCGAMRESQCVLGSFFTCLLVIFAAEVTTGVFAFIGKGVAIRHVQTMYEEAYNDYLKDRGKGNGTLITFHSTFQCCGKESSEQVQPTCPKELLGHKNCIDEIETIISVKLQLIGIVGIGIAGLTIFGMIFSMVLCCAIRNSRDVI</sequence>
<evidence type="ECO:0000250" key="1"/>
<evidence type="ECO:0000255" key="2"/>
<evidence type="ECO:0000303" key="3">
    <source ref="2"/>
</evidence>
<evidence type="ECO:0000305" key="4"/>
<protein>
    <recommendedName>
        <fullName>Tetraspanin-2</fullName>
        <shortName>Tspan-2</shortName>
    </recommendedName>
    <alternativeName>
        <fullName>Tetraspan NET-3</fullName>
    </alternativeName>
</protein>
<gene>
    <name type="primary">TSPAN2</name>
</gene>
<name>TSN2_HUMAN</name>
<proteinExistence type="evidence at protein level"/>
<reference key="1">
    <citation type="journal article" date="1998" name="Biochim. Biophys. Acta">
        <title>Sequences and expression of six new members of the tetraspanin/TM4SF family.</title>
        <authorList>
            <person name="Todd S.C."/>
            <person name="Doctor V.S."/>
            <person name="Levy S."/>
        </authorList>
    </citation>
    <scope>NUCLEOTIDE SEQUENCE [MRNA] (ISOFORM 1)</scope>
</reference>
<reference key="2">
    <citation type="submission" date="2010-03" db="EMBL/GenBank/DDBJ databases">
        <title>Cloning of a TSPAN2 splice isoform.</title>
        <authorList>
            <person name="Ryu H.-W."/>
            <person name="Park J."/>
        </authorList>
    </citation>
    <scope>NUCLEOTIDE SEQUENCE [MRNA] (ISOFORM 2)</scope>
    <scope>ALTERNATIVE SPLICING</scope>
</reference>
<reference key="3">
    <citation type="journal article" date="2006" name="Nature">
        <title>The DNA sequence and biological annotation of human chromosome 1.</title>
        <authorList>
            <person name="Gregory S.G."/>
            <person name="Barlow K.F."/>
            <person name="McLay K.E."/>
            <person name="Kaul R."/>
            <person name="Swarbreck D."/>
            <person name="Dunham A."/>
            <person name="Scott C.E."/>
            <person name="Howe K.L."/>
            <person name="Woodfine K."/>
            <person name="Spencer C.C.A."/>
            <person name="Jones M.C."/>
            <person name="Gillson C."/>
            <person name="Searle S."/>
            <person name="Zhou Y."/>
            <person name="Kokocinski F."/>
            <person name="McDonald L."/>
            <person name="Evans R."/>
            <person name="Phillips K."/>
            <person name="Atkinson A."/>
            <person name="Cooper R."/>
            <person name="Jones C."/>
            <person name="Hall R.E."/>
            <person name="Andrews T.D."/>
            <person name="Lloyd C."/>
            <person name="Ainscough R."/>
            <person name="Almeida J.P."/>
            <person name="Ambrose K.D."/>
            <person name="Anderson F."/>
            <person name="Andrew R.W."/>
            <person name="Ashwell R.I.S."/>
            <person name="Aubin K."/>
            <person name="Babbage A.K."/>
            <person name="Bagguley C.L."/>
            <person name="Bailey J."/>
            <person name="Beasley H."/>
            <person name="Bethel G."/>
            <person name="Bird C.P."/>
            <person name="Bray-Allen S."/>
            <person name="Brown J.Y."/>
            <person name="Brown A.J."/>
            <person name="Buckley D."/>
            <person name="Burton J."/>
            <person name="Bye J."/>
            <person name="Carder C."/>
            <person name="Chapman J.C."/>
            <person name="Clark S.Y."/>
            <person name="Clarke G."/>
            <person name="Clee C."/>
            <person name="Cobley V."/>
            <person name="Collier R.E."/>
            <person name="Corby N."/>
            <person name="Coville G.J."/>
            <person name="Davies J."/>
            <person name="Deadman R."/>
            <person name="Dunn M."/>
            <person name="Earthrowl M."/>
            <person name="Ellington A.G."/>
            <person name="Errington H."/>
            <person name="Frankish A."/>
            <person name="Frankland J."/>
            <person name="French L."/>
            <person name="Garner P."/>
            <person name="Garnett J."/>
            <person name="Gay L."/>
            <person name="Ghori M.R.J."/>
            <person name="Gibson R."/>
            <person name="Gilby L.M."/>
            <person name="Gillett W."/>
            <person name="Glithero R.J."/>
            <person name="Grafham D.V."/>
            <person name="Griffiths C."/>
            <person name="Griffiths-Jones S."/>
            <person name="Grocock R."/>
            <person name="Hammond S."/>
            <person name="Harrison E.S.I."/>
            <person name="Hart E."/>
            <person name="Haugen E."/>
            <person name="Heath P.D."/>
            <person name="Holmes S."/>
            <person name="Holt K."/>
            <person name="Howden P.J."/>
            <person name="Hunt A.R."/>
            <person name="Hunt S.E."/>
            <person name="Hunter G."/>
            <person name="Isherwood J."/>
            <person name="James R."/>
            <person name="Johnson C."/>
            <person name="Johnson D."/>
            <person name="Joy A."/>
            <person name="Kay M."/>
            <person name="Kershaw J.K."/>
            <person name="Kibukawa M."/>
            <person name="Kimberley A.M."/>
            <person name="King A."/>
            <person name="Knights A.J."/>
            <person name="Lad H."/>
            <person name="Laird G."/>
            <person name="Lawlor S."/>
            <person name="Leongamornlert D.A."/>
            <person name="Lloyd D.M."/>
            <person name="Loveland J."/>
            <person name="Lovell J."/>
            <person name="Lush M.J."/>
            <person name="Lyne R."/>
            <person name="Martin S."/>
            <person name="Mashreghi-Mohammadi M."/>
            <person name="Matthews L."/>
            <person name="Matthews N.S.W."/>
            <person name="McLaren S."/>
            <person name="Milne S."/>
            <person name="Mistry S."/>
            <person name="Moore M.J.F."/>
            <person name="Nickerson T."/>
            <person name="O'Dell C.N."/>
            <person name="Oliver K."/>
            <person name="Palmeiri A."/>
            <person name="Palmer S.A."/>
            <person name="Parker A."/>
            <person name="Patel D."/>
            <person name="Pearce A.V."/>
            <person name="Peck A.I."/>
            <person name="Pelan S."/>
            <person name="Phelps K."/>
            <person name="Phillimore B.J."/>
            <person name="Plumb R."/>
            <person name="Rajan J."/>
            <person name="Raymond C."/>
            <person name="Rouse G."/>
            <person name="Saenphimmachak C."/>
            <person name="Sehra H.K."/>
            <person name="Sheridan E."/>
            <person name="Shownkeen R."/>
            <person name="Sims S."/>
            <person name="Skuce C.D."/>
            <person name="Smith M."/>
            <person name="Steward C."/>
            <person name="Subramanian S."/>
            <person name="Sycamore N."/>
            <person name="Tracey A."/>
            <person name="Tromans A."/>
            <person name="Van Helmond Z."/>
            <person name="Wall M."/>
            <person name="Wallis J.M."/>
            <person name="White S."/>
            <person name="Whitehead S.L."/>
            <person name="Wilkinson J.E."/>
            <person name="Willey D.L."/>
            <person name="Williams H."/>
            <person name="Wilming L."/>
            <person name="Wray P.W."/>
            <person name="Wu Z."/>
            <person name="Coulson A."/>
            <person name="Vaudin M."/>
            <person name="Sulston J.E."/>
            <person name="Durbin R.M."/>
            <person name="Hubbard T."/>
            <person name="Wooster R."/>
            <person name="Dunham I."/>
            <person name="Carter N.P."/>
            <person name="McVean G."/>
            <person name="Ross M.T."/>
            <person name="Harrow J."/>
            <person name="Olson M.V."/>
            <person name="Beck S."/>
            <person name="Rogers J."/>
            <person name="Bentley D.R."/>
        </authorList>
    </citation>
    <scope>NUCLEOTIDE SEQUENCE [LARGE SCALE GENOMIC DNA]</scope>
</reference>
<reference key="4">
    <citation type="journal article" date="2004" name="Genome Res.">
        <title>The status, quality, and expansion of the NIH full-length cDNA project: the Mammalian Gene Collection (MGC).</title>
        <authorList>
            <consortium name="The MGC Project Team"/>
        </authorList>
    </citation>
    <scope>NUCLEOTIDE SEQUENCE [LARGE SCALE MRNA] (ISOFORM 1)</scope>
    <source>
        <tissue>Kidney</tissue>
    </source>
</reference>
<accession>O60636</accession>
<accession>D6PTH4</accession>
<accession>Q5TET2</accession>
<accession>Q8WU05</accession>
<organism>
    <name type="scientific">Homo sapiens</name>
    <name type="common">Human</name>
    <dbReference type="NCBI Taxonomy" id="9606"/>
    <lineage>
        <taxon>Eukaryota</taxon>
        <taxon>Metazoa</taxon>
        <taxon>Chordata</taxon>
        <taxon>Craniata</taxon>
        <taxon>Vertebrata</taxon>
        <taxon>Euteleostomi</taxon>
        <taxon>Mammalia</taxon>
        <taxon>Eutheria</taxon>
        <taxon>Euarchontoglires</taxon>
        <taxon>Primates</taxon>
        <taxon>Haplorrhini</taxon>
        <taxon>Catarrhini</taxon>
        <taxon>Hominidae</taxon>
        <taxon>Homo</taxon>
    </lineage>
</organism>
<dbReference type="EMBL" id="AF054839">
    <property type="protein sequence ID" value="AAC69715.1"/>
    <property type="molecule type" value="mRNA"/>
</dbReference>
<dbReference type="EMBL" id="GU971730">
    <property type="protein sequence ID" value="ADF80915.1"/>
    <property type="molecule type" value="mRNA"/>
</dbReference>
<dbReference type="EMBL" id="AL109660">
    <property type="status" value="NOT_ANNOTATED_CDS"/>
    <property type="molecule type" value="Genomic_DNA"/>
</dbReference>
<dbReference type="EMBL" id="BC021675">
    <property type="protein sequence ID" value="AAH21675.1"/>
    <property type="molecule type" value="mRNA"/>
</dbReference>
<dbReference type="CCDS" id="CCDS881.1">
    <molecule id="O60636-1"/>
</dbReference>
<dbReference type="PIR" id="A59263">
    <property type="entry name" value="A59263"/>
</dbReference>
<dbReference type="RefSeq" id="NP_001295245.1">
    <molecule id="O60636-2"/>
    <property type="nucleotide sequence ID" value="NM_001308316.2"/>
</dbReference>
<dbReference type="RefSeq" id="NP_005716.2">
    <molecule id="O60636-1"/>
    <property type="nucleotide sequence ID" value="NM_005725.5"/>
</dbReference>
<dbReference type="SMR" id="O60636"/>
<dbReference type="BioGRID" id="115407">
    <property type="interactions" value="68"/>
</dbReference>
<dbReference type="FunCoup" id="O60636">
    <property type="interactions" value="305"/>
</dbReference>
<dbReference type="IntAct" id="O60636">
    <property type="interactions" value="78"/>
</dbReference>
<dbReference type="STRING" id="9606.ENSP00000358529"/>
<dbReference type="GlyCosmos" id="O60636">
    <property type="glycosylation" value="1 site, No reported glycans"/>
</dbReference>
<dbReference type="GlyGen" id="O60636">
    <property type="glycosylation" value="1 site"/>
</dbReference>
<dbReference type="iPTMnet" id="O60636"/>
<dbReference type="PhosphoSitePlus" id="O60636"/>
<dbReference type="BioMuta" id="TSPAN2"/>
<dbReference type="MassIVE" id="O60636"/>
<dbReference type="PaxDb" id="9606-ENSP00000358529"/>
<dbReference type="PeptideAtlas" id="O60636"/>
<dbReference type="ProteomicsDB" id="12837"/>
<dbReference type="ProteomicsDB" id="49489">
    <molecule id="O60636-1"/>
</dbReference>
<dbReference type="Antibodypedia" id="2866">
    <property type="antibodies" value="241 antibodies from 25 providers"/>
</dbReference>
<dbReference type="DNASU" id="10100"/>
<dbReference type="Ensembl" id="ENST00000369516.7">
    <molecule id="O60636-1"/>
    <property type="protein sequence ID" value="ENSP00000358529.2"/>
    <property type="gene ID" value="ENSG00000134198.10"/>
</dbReference>
<dbReference type="GeneID" id="10100"/>
<dbReference type="KEGG" id="hsa:10100"/>
<dbReference type="MANE-Select" id="ENST00000369516.7">
    <property type="protein sequence ID" value="ENSP00000358529.2"/>
    <property type="RefSeq nucleotide sequence ID" value="NM_005725.6"/>
    <property type="RefSeq protein sequence ID" value="NP_005716.2"/>
</dbReference>
<dbReference type="UCSC" id="uc001eft.5">
    <molecule id="O60636-1"/>
    <property type="organism name" value="human"/>
</dbReference>
<dbReference type="AGR" id="HGNC:20659"/>
<dbReference type="CTD" id="10100"/>
<dbReference type="DisGeNET" id="10100"/>
<dbReference type="GeneCards" id="TSPAN2"/>
<dbReference type="HGNC" id="HGNC:20659">
    <property type="gene designation" value="TSPAN2"/>
</dbReference>
<dbReference type="HPA" id="ENSG00000134198">
    <property type="expression patterns" value="Tissue enhanced (endometrium, intestine)"/>
</dbReference>
<dbReference type="MIM" id="613133">
    <property type="type" value="gene"/>
</dbReference>
<dbReference type="neXtProt" id="NX_O60636"/>
<dbReference type="OpenTargets" id="ENSG00000134198"/>
<dbReference type="PharmGKB" id="PA134938787"/>
<dbReference type="VEuPathDB" id="HostDB:ENSG00000134198"/>
<dbReference type="eggNOG" id="KOG3882">
    <property type="taxonomic scope" value="Eukaryota"/>
</dbReference>
<dbReference type="GeneTree" id="ENSGT00940000157504"/>
<dbReference type="InParanoid" id="O60636"/>
<dbReference type="OMA" id="EYMKNPG"/>
<dbReference type="OrthoDB" id="5870230at2759"/>
<dbReference type="PAN-GO" id="O60636">
    <property type="GO annotations" value="1 GO annotation based on evolutionary models"/>
</dbReference>
<dbReference type="PhylomeDB" id="O60636"/>
<dbReference type="TreeFam" id="TF352895"/>
<dbReference type="PathwayCommons" id="O60636"/>
<dbReference type="SignaLink" id="O60636"/>
<dbReference type="BioGRID-ORCS" id="10100">
    <property type="hits" value="3 hits in 1145 CRISPR screens"/>
</dbReference>
<dbReference type="ChiTaRS" id="TSPAN2">
    <property type="organism name" value="human"/>
</dbReference>
<dbReference type="GeneWiki" id="TSPAN2"/>
<dbReference type="GenomeRNAi" id="10100"/>
<dbReference type="Pharos" id="O60636">
    <property type="development level" value="Tbio"/>
</dbReference>
<dbReference type="PRO" id="PR:O60636"/>
<dbReference type="Proteomes" id="UP000005640">
    <property type="component" value="Chromosome 1"/>
</dbReference>
<dbReference type="RNAct" id="O60636">
    <property type="molecule type" value="protein"/>
</dbReference>
<dbReference type="Bgee" id="ENSG00000134198">
    <property type="expression patterns" value="Expressed in body of uterus and 154 other cell types or tissues"/>
</dbReference>
<dbReference type="ExpressionAtlas" id="O60636">
    <property type="expression patterns" value="baseline and differential"/>
</dbReference>
<dbReference type="GO" id="GO:0016020">
    <property type="term" value="C:membrane"/>
    <property type="evidence" value="ECO:0000304"/>
    <property type="project" value="ProtInc"/>
</dbReference>
<dbReference type="GO" id="GO:0043209">
    <property type="term" value="C:myelin sheath"/>
    <property type="evidence" value="ECO:0007669"/>
    <property type="project" value="Ensembl"/>
</dbReference>
<dbReference type="GO" id="GO:0005654">
    <property type="term" value="C:nucleoplasm"/>
    <property type="evidence" value="ECO:0000314"/>
    <property type="project" value="HPA"/>
</dbReference>
<dbReference type="GO" id="GO:0005886">
    <property type="term" value="C:plasma membrane"/>
    <property type="evidence" value="ECO:0000318"/>
    <property type="project" value="GO_Central"/>
</dbReference>
<dbReference type="GO" id="GO:0014002">
    <property type="term" value="P:astrocyte development"/>
    <property type="evidence" value="ECO:0007669"/>
    <property type="project" value="Ensembl"/>
</dbReference>
<dbReference type="GO" id="GO:0061564">
    <property type="term" value="P:axon development"/>
    <property type="evidence" value="ECO:0007669"/>
    <property type="project" value="Ensembl"/>
</dbReference>
<dbReference type="GO" id="GO:0006954">
    <property type="term" value="P:inflammatory response"/>
    <property type="evidence" value="ECO:0007669"/>
    <property type="project" value="Ensembl"/>
</dbReference>
<dbReference type="GO" id="GO:0014005">
    <property type="term" value="P:microglia development"/>
    <property type="evidence" value="ECO:0007669"/>
    <property type="project" value="Ensembl"/>
</dbReference>
<dbReference type="GO" id="GO:0042552">
    <property type="term" value="P:myelination"/>
    <property type="evidence" value="ECO:0007669"/>
    <property type="project" value="Ensembl"/>
</dbReference>
<dbReference type="GO" id="GO:0048709">
    <property type="term" value="P:oligodendrocyte differentiation"/>
    <property type="evidence" value="ECO:0007669"/>
    <property type="project" value="Ensembl"/>
</dbReference>
<dbReference type="CDD" id="cd03151">
    <property type="entry name" value="CD81_like_LEL"/>
    <property type="match status" value="1"/>
</dbReference>
<dbReference type="FunFam" id="1.10.1450.10:FF:000015">
    <property type="entry name" value="Tetraspanin"/>
    <property type="match status" value="1"/>
</dbReference>
<dbReference type="Gene3D" id="1.10.1450.10">
    <property type="entry name" value="Tetraspanin"/>
    <property type="match status" value="1"/>
</dbReference>
<dbReference type="InterPro" id="IPR018499">
    <property type="entry name" value="Tetraspanin/Peripherin"/>
</dbReference>
<dbReference type="InterPro" id="IPR000301">
    <property type="entry name" value="Tetraspanin_animals"/>
</dbReference>
<dbReference type="InterPro" id="IPR018503">
    <property type="entry name" value="Tetraspanin_CS"/>
</dbReference>
<dbReference type="InterPro" id="IPR008952">
    <property type="entry name" value="Tetraspanin_EC2_sf"/>
</dbReference>
<dbReference type="PANTHER" id="PTHR19282">
    <property type="entry name" value="TETRASPANIN"/>
    <property type="match status" value="1"/>
</dbReference>
<dbReference type="PANTHER" id="PTHR19282:SF155">
    <property type="entry name" value="TETRASPANIN-2"/>
    <property type="match status" value="1"/>
</dbReference>
<dbReference type="Pfam" id="PF00335">
    <property type="entry name" value="Tetraspanin"/>
    <property type="match status" value="1"/>
</dbReference>
<dbReference type="PIRSF" id="PIRSF002419">
    <property type="entry name" value="Tetraspanin"/>
    <property type="match status" value="1"/>
</dbReference>
<dbReference type="PRINTS" id="PR00259">
    <property type="entry name" value="TMFOUR"/>
</dbReference>
<dbReference type="SUPFAM" id="SSF48652">
    <property type="entry name" value="Tetraspanin"/>
    <property type="match status" value="1"/>
</dbReference>
<dbReference type="PROSITE" id="PS00421">
    <property type="entry name" value="TM4_1"/>
    <property type="match status" value="1"/>
</dbReference>